<keyword id="KW-0997">Cell inner membrane</keyword>
<keyword id="KW-1003">Cell membrane</keyword>
<keyword id="KW-0406">Ion transport</keyword>
<keyword id="KW-0472">Membrane</keyword>
<keyword id="KW-1185">Reference proteome</keyword>
<keyword id="KW-0812">Transmembrane</keyword>
<keyword id="KW-1133">Transmembrane helix</keyword>
<keyword id="KW-0813">Transport</keyword>
<keyword id="KW-0862">Zinc</keyword>
<accession>A8AGD8</accession>
<protein>
    <recommendedName>
        <fullName evidence="1">Zinc transport protein ZntB</fullName>
    </recommendedName>
</protein>
<gene>
    <name evidence="1" type="primary">zntB</name>
    <name type="ordered locus">CKO_01415</name>
</gene>
<feature type="chain" id="PRO_1000069067" description="Zinc transport protein ZntB">
    <location>
        <begin position="1"/>
        <end position="327"/>
    </location>
</feature>
<feature type="topological domain" description="Cytoplasmic" evidence="1">
    <location>
        <begin position="1"/>
        <end position="273"/>
    </location>
</feature>
<feature type="transmembrane region" description="Helical" evidence="1">
    <location>
        <begin position="274"/>
        <end position="294"/>
    </location>
</feature>
<feature type="topological domain" description="Periplasmic" evidence="1">
    <location>
        <begin position="295"/>
        <end position="300"/>
    </location>
</feature>
<feature type="transmembrane region" description="Helical" evidence="1">
    <location>
        <begin position="301"/>
        <end position="321"/>
    </location>
</feature>
<feature type="topological domain" description="Cytoplasmic" evidence="1">
    <location>
        <begin position="322"/>
        <end position="327"/>
    </location>
</feature>
<name>ZNTB_CITK8</name>
<reference key="1">
    <citation type="submission" date="2007-08" db="EMBL/GenBank/DDBJ databases">
        <authorList>
            <consortium name="The Citrobacter koseri Genome Sequencing Project"/>
            <person name="McClelland M."/>
            <person name="Sanderson E.K."/>
            <person name="Porwollik S."/>
            <person name="Spieth J."/>
            <person name="Clifton W.S."/>
            <person name="Latreille P."/>
            <person name="Courtney L."/>
            <person name="Wang C."/>
            <person name="Pepin K."/>
            <person name="Bhonagiri V."/>
            <person name="Nash W."/>
            <person name="Johnson M."/>
            <person name="Thiruvilangam P."/>
            <person name="Wilson R."/>
        </authorList>
    </citation>
    <scope>NUCLEOTIDE SEQUENCE [LARGE SCALE GENOMIC DNA]</scope>
    <source>
        <strain>ATCC BAA-895 / CDC 4225-83 / SGSC4696</strain>
    </source>
</reference>
<proteinExistence type="inferred from homology"/>
<comment type="function">
    <text evidence="1">Zinc transporter. Acts as a Zn(2+):proton symporter, which likely mediates zinc ion uptake.</text>
</comment>
<comment type="catalytic activity">
    <reaction evidence="1">
        <text>Zn(2+)(out) + H(+)(out) = Zn(2+)(in) + H(+)(in)</text>
        <dbReference type="Rhea" id="RHEA:71195"/>
        <dbReference type="ChEBI" id="CHEBI:15378"/>
        <dbReference type="ChEBI" id="CHEBI:29105"/>
    </reaction>
    <physiologicalReaction direction="left-to-right" evidence="1">
        <dbReference type="Rhea" id="RHEA:71196"/>
    </physiologicalReaction>
</comment>
<comment type="subcellular location">
    <subcellularLocation>
        <location evidence="1">Cell inner membrane</location>
        <topology evidence="1">Multi-pass membrane protein</topology>
    </subcellularLocation>
</comment>
<comment type="similarity">
    <text evidence="1">Belongs to the CorA metal ion transporter (MIT) (TC 1.A.35) family.</text>
</comment>
<evidence type="ECO:0000255" key="1">
    <source>
        <dbReference type="HAMAP-Rule" id="MF_01565"/>
    </source>
</evidence>
<dbReference type="EMBL" id="CP000822">
    <property type="protein sequence ID" value="ABV12551.1"/>
    <property type="molecule type" value="Genomic_DNA"/>
</dbReference>
<dbReference type="RefSeq" id="WP_012132292.1">
    <property type="nucleotide sequence ID" value="NC_009792.1"/>
</dbReference>
<dbReference type="SMR" id="A8AGD8"/>
<dbReference type="STRING" id="290338.CKO_01415"/>
<dbReference type="GeneID" id="45135503"/>
<dbReference type="KEGG" id="cko:CKO_01415"/>
<dbReference type="HOGENOM" id="CLU_007127_2_0_6"/>
<dbReference type="OrthoDB" id="9803484at2"/>
<dbReference type="Proteomes" id="UP000008148">
    <property type="component" value="Chromosome"/>
</dbReference>
<dbReference type="GO" id="GO:0005886">
    <property type="term" value="C:plasma membrane"/>
    <property type="evidence" value="ECO:0007669"/>
    <property type="project" value="UniProtKB-SubCell"/>
</dbReference>
<dbReference type="GO" id="GO:0050897">
    <property type="term" value="F:cobalt ion binding"/>
    <property type="evidence" value="ECO:0007669"/>
    <property type="project" value="TreeGrafter"/>
</dbReference>
<dbReference type="GO" id="GO:0015087">
    <property type="term" value="F:cobalt ion transmembrane transporter activity"/>
    <property type="evidence" value="ECO:0007669"/>
    <property type="project" value="TreeGrafter"/>
</dbReference>
<dbReference type="GO" id="GO:0000287">
    <property type="term" value="F:magnesium ion binding"/>
    <property type="evidence" value="ECO:0007669"/>
    <property type="project" value="TreeGrafter"/>
</dbReference>
<dbReference type="GO" id="GO:0015095">
    <property type="term" value="F:magnesium ion transmembrane transporter activity"/>
    <property type="evidence" value="ECO:0007669"/>
    <property type="project" value="TreeGrafter"/>
</dbReference>
<dbReference type="GO" id="GO:0005385">
    <property type="term" value="F:zinc ion transmembrane transporter activity"/>
    <property type="evidence" value="ECO:0007669"/>
    <property type="project" value="UniProtKB-UniRule"/>
</dbReference>
<dbReference type="CDD" id="cd12833">
    <property type="entry name" value="ZntB-like_1"/>
    <property type="match status" value="1"/>
</dbReference>
<dbReference type="FunFam" id="1.20.58.340:FF:000002">
    <property type="entry name" value="Zinc transport protein ZntB"/>
    <property type="match status" value="1"/>
</dbReference>
<dbReference type="Gene3D" id="3.30.460.20">
    <property type="entry name" value="CorA soluble domain-like"/>
    <property type="match status" value="1"/>
</dbReference>
<dbReference type="Gene3D" id="1.20.58.340">
    <property type="entry name" value="Magnesium transport protein CorA, transmembrane region"/>
    <property type="match status" value="2"/>
</dbReference>
<dbReference type="HAMAP" id="MF_01565">
    <property type="entry name" value="ZntB"/>
    <property type="match status" value="1"/>
</dbReference>
<dbReference type="InterPro" id="IPR045861">
    <property type="entry name" value="CorA_cytoplasmic_dom"/>
</dbReference>
<dbReference type="InterPro" id="IPR045863">
    <property type="entry name" value="CorA_TM1_TM2"/>
</dbReference>
<dbReference type="InterPro" id="IPR002523">
    <property type="entry name" value="MgTranspt_CorA/ZnTranspt_ZntB"/>
</dbReference>
<dbReference type="InterPro" id="IPR023714">
    <property type="entry name" value="Zn_transp_ZntB"/>
</dbReference>
<dbReference type="NCBIfam" id="NF007092">
    <property type="entry name" value="PRK09546.1"/>
    <property type="match status" value="1"/>
</dbReference>
<dbReference type="PANTHER" id="PTHR46494">
    <property type="entry name" value="CORA FAMILY METAL ION TRANSPORTER (EUROFUNG)"/>
    <property type="match status" value="1"/>
</dbReference>
<dbReference type="PANTHER" id="PTHR46494:SF3">
    <property type="entry name" value="ZINC TRANSPORT PROTEIN ZNTB"/>
    <property type="match status" value="1"/>
</dbReference>
<dbReference type="Pfam" id="PF01544">
    <property type="entry name" value="CorA"/>
    <property type="match status" value="1"/>
</dbReference>
<dbReference type="SUPFAM" id="SSF143865">
    <property type="entry name" value="CorA soluble domain-like"/>
    <property type="match status" value="1"/>
</dbReference>
<dbReference type="SUPFAM" id="SSF144083">
    <property type="entry name" value="Magnesium transport protein CorA, transmembrane region"/>
    <property type="match status" value="1"/>
</dbReference>
<sequence>MEAIKGSEVNVPDAVFAWLLDGRGGIKPLENDDIIDSQHPCWLHLNYTHPDSAQWLASTPLLPNSVRDALAGESSRPRVSRMGEGTLITLRCINGSTDERPDQLVAMRVYMDERFIVSTRQRKVLALDEVVSDLQEGTGPSDCGGWLVDVCDALTDHASEFIEQLHDKIIDLEDNLLDQQIPPRGFLALLRKQLIVMRRYMAPQRDVYARLASERLAWMNDDQRRRMQDIADRLGRGLDEIDACIARTGVMADEIAQVMQESLARRTYTMSLMAMVFLPSTFLTGLFGVNLGGIPGGAWHFGFSMFCILLVVLIGGVTLWLHRSKWL</sequence>
<organism>
    <name type="scientific">Citrobacter koseri (strain ATCC BAA-895 / CDC 4225-83 / SGSC4696)</name>
    <dbReference type="NCBI Taxonomy" id="290338"/>
    <lineage>
        <taxon>Bacteria</taxon>
        <taxon>Pseudomonadati</taxon>
        <taxon>Pseudomonadota</taxon>
        <taxon>Gammaproteobacteria</taxon>
        <taxon>Enterobacterales</taxon>
        <taxon>Enterobacteriaceae</taxon>
        <taxon>Citrobacter</taxon>
    </lineage>
</organism>